<organism>
    <name type="scientific">Oceanobacillus iheyensis (strain DSM 14371 / CIP 107618 / JCM 11309 / KCTC 3954 / HTE831)</name>
    <dbReference type="NCBI Taxonomy" id="221109"/>
    <lineage>
        <taxon>Bacteria</taxon>
        <taxon>Bacillati</taxon>
        <taxon>Bacillota</taxon>
        <taxon>Bacilli</taxon>
        <taxon>Bacillales</taxon>
        <taxon>Bacillaceae</taxon>
        <taxon>Oceanobacillus</taxon>
    </lineage>
</organism>
<evidence type="ECO:0000255" key="1">
    <source>
        <dbReference type="HAMAP-Rule" id="MF_00729"/>
    </source>
</evidence>
<keyword id="KW-0324">Glycolysis</keyword>
<keyword id="KW-0456">Lyase</keyword>
<keyword id="KW-1185">Reference proteome</keyword>
<keyword id="KW-0704">Schiff base</keyword>
<proteinExistence type="inferred from homology"/>
<sequence length="294" mass="32819">MNQKQLEQMKTSKGFIAALDQSGGSTPKALAAYGIPEDSYNNEDEMFDLVHEMRTRIITSKAFDSDSIIGAILFEQTMDREIEGMYTGDYLAEKKGIVPFLKVDKGLAEETNGVQLMKPIDNLDETLRRANERNIFGTKMRSVIKQANPKAIKEVVDQQFDIGKKIIAAGLVPIIEPEVDIHSPEKEKCEDLLKAEIINHLNQLSEDENVMLKLTIPTKKNLYKELIDHPRVVRVVALSGGYSTDVANEKLKENNGLIASFSRALSQDLNADQSDEDFNLALEKAVKSIYDASV</sequence>
<protein>
    <recommendedName>
        <fullName evidence="1">Fructose-bisphosphate aldolase class 1</fullName>
        <ecNumber evidence="1">4.1.2.13</ecNumber>
    </recommendedName>
    <alternativeName>
        <fullName>Fructose-bisphosphate aldolase class I</fullName>
        <shortName evidence="1">FBP aldolase</shortName>
    </alternativeName>
</protein>
<dbReference type="EC" id="4.1.2.13" evidence="1"/>
<dbReference type="EMBL" id="BA000028">
    <property type="protein sequence ID" value="BAC15201.1"/>
    <property type="molecule type" value="Genomic_DNA"/>
</dbReference>
<dbReference type="RefSeq" id="WP_011067641.1">
    <property type="nucleotide sequence ID" value="NC_004193.1"/>
</dbReference>
<dbReference type="SMR" id="Q8ELI2"/>
<dbReference type="STRING" id="221109.gene:10735497"/>
<dbReference type="KEGG" id="oih:OB3245"/>
<dbReference type="eggNOG" id="COG3588">
    <property type="taxonomic scope" value="Bacteria"/>
</dbReference>
<dbReference type="HOGENOM" id="CLU_081560_0_0_9"/>
<dbReference type="OrthoDB" id="9813469at2"/>
<dbReference type="PhylomeDB" id="Q8ELI2"/>
<dbReference type="UniPathway" id="UPA00109">
    <property type="reaction ID" value="UER00183"/>
</dbReference>
<dbReference type="Proteomes" id="UP000000822">
    <property type="component" value="Chromosome"/>
</dbReference>
<dbReference type="GO" id="GO:0004332">
    <property type="term" value="F:fructose-bisphosphate aldolase activity"/>
    <property type="evidence" value="ECO:0007669"/>
    <property type="project" value="UniProtKB-UniRule"/>
</dbReference>
<dbReference type="GO" id="GO:0006096">
    <property type="term" value="P:glycolytic process"/>
    <property type="evidence" value="ECO:0007669"/>
    <property type="project" value="UniProtKB-UniRule"/>
</dbReference>
<dbReference type="CDD" id="cd00949">
    <property type="entry name" value="FBP_aldolase_I_bact"/>
    <property type="match status" value="1"/>
</dbReference>
<dbReference type="Gene3D" id="3.20.20.70">
    <property type="entry name" value="Aldolase class I"/>
    <property type="match status" value="1"/>
</dbReference>
<dbReference type="HAMAP" id="MF_00729">
    <property type="entry name" value="FBP_aldolase_1"/>
    <property type="match status" value="1"/>
</dbReference>
<dbReference type="InterPro" id="IPR013785">
    <property type="entry name" value="Aldolase_TIM"/>
</dbReference>
<dbReference type="InterPro" id="IPR000741">
    <property type="entry name" value="FBA_I"/>
</dbReference>
<dbReference type="InterPro" id="IPR023014">
    <property type="entry name" value="FBA_I_Gram+-type"/>
</dbReference>
<dbReference type="NCBIfam" id="NF003784">
    <property type="entry name" value="PRK05377.1"/>
    <property type="match status" value="1"/>
</dbReference>
<dbReference type="PANTHER" id="PTHR11627">
    <property type="entry name" value="FRUCTOSE-BISPHOSPHATE ALDOLASE"/>
    <property type="match status" value="1"/>
</dbReference>
<dbReference type="Pfam" id="PF00274">
    <property type="entry name" value="Glycolytic"/>
    <property type="match status" value="1"/>
</dbReference>
<dbReference type="SUPFAM" id="SSF51569">
    <property type="entry name" value="Aldolase"/>
    <property type="match status" value="1"/>
</dbReference>
<reference key="1">
    <citation type="journal article" date="2002" name="Nucleic Acids Res.">
        <title>Genome sequence of Oceanobacillus iheyensis isolated from the Iheya Ridge and its unexpected adaptive capabilities to extreme environments.</title>
        <authorList>
            <person name="Takami H."/>
            <person name="Takaki Y."/>
            <person name="Uchiyama I."/>
        </authorList>
    </citation>
    <scope>NUCLEOTIDE SEQUENCE [LARGE SCALE GENOMIC DNA]</scope>
    <source>
        <strain>DSM 14371 / CIP 107618 / JCM 11309 / KCTC 3954 / HTE831</strain>
    </source>
</reference>
<comment type="catalytic activity">
    <reaction evidence="1">
        <text>beta-D-fructose 1,6-bisphosphate = D-glyceraldehyde 3-phosphate + dihydroxyacetone phosphate</text>
        <dbReference type="Rhea" id="RHEA:14729"/>
        <dbReference type="ChEBI" id="CHEBI:32966"/>
        <dbReference type="ChEBI" id="CHEBI:57642"/>
        <dbReference type="ChEBI" id="CHEBI:59776"/>
        <dbReference type="EC" id="4.1.2.13"/>
    </reaction>
</comment>
<comment type="pathway">
    <text evidence="1">Carbohydrate degradation; glycolysis; D-glyceraldehyde 3-phosphate and glycerone phosphate from D-glucose: step 4/4.</text>
</comment>
<comment type="similarity">
    <text evidence="1">Belongs to the class I fructose-bisphosphate aldolase family.</text>
</comment>
<name>ALF1_OCEIH</name>
<gene>
    <name evidence="1" type="primary">fda</name>
    <name type="ordered locus">OB3245</name>
</gene>
<feature type="chain" id="PRO_0000216901" description="Fructose-bisphosphate aldolase class 1">
    <location>
        <begin position="1"/>
        <end position="294"/>
    </location>
</feature>
<feature type="active site" description="Proton acceptor" evidence="1">
    <location>
        <position position="176"/>
    </location>
</feature>
<feature type="active site" description="Schiff-base intermediate with dihydroxyacetone-P" evidence="1">
    <location>
        <position position="213"/>
    </location>
</feature>
<accession>Q8ELI2</accession>